<dbReference type="EMBL" id="CP000860">
    <property type="protein sequence ID" value="ACA60703.1"/>
    <property type="molecule type" value="Genomic_DNA"/>
</dbReference>
<dbReference type="RefSeq" id="WP_012303277.1">
    <property type="nucleotide sequence ID" value="NC_010424.1"/>
</dbReference>
<dbReference type="SMR" id="B1I6T1"/>
<dbReference type="STRING" id="477974.Daud_2216"/>
<dbReference type="KEGG" id="dau:Daud_2216"/>
<dbReference type="eggNOG" id="COG0360">
    <property type="taxonomic scope" value="Bacteria"/>
</dbReference>
<dbReference type="HOGENOM" id="CLU_113441_5_1_9"/>
<dbReference type="OrthoDB" id="9812702at2"/>
<dbReference type="Proteomes" id="UP000008544">
    <property type="component" value="Chromosome"/>
</dbReference>
<dbReference type="GO" id="GO:0005737">
    <property type="term" value="C:cytoplasm"/>
    <property type="evidence" value="ECO:0007669"/>
    <property type="project" value="UniProtKB-ARBA"/>
</dbReference>
<dbReference type="GO" id="GO:1990904">
    <property type="term" value="C:ribonucleoprotein complex"/>
    <property type="evidence" value="ECO:0007669"/>
    <property type="project" value="UniProtKB-KW"/>
</dbReference>
<dbReference type="GO" id="GO:0005840">
    <property type="term" value="C:ribosome"/>
    <property type="evidence" value="ECO:0007669"/>
    <property type="project" value="UniProtKB-KW"/>
</dbReference>
<dbReference type="GO" id="GO:0070181">
    <property type="term" value="F:small ribosomal subunit rRNA binding"/>
    <property type="evidence" value="ECO:0007669"/>
    <property type="project" value="TreeGrafter"/>
</dbReference>
<dbReference type="GO" id="GO:0003735">
    <property type="term" value="F:structural constituent of ribosome"/>
    <property type="evidence" value="ECO:0007669"/>
    <property type="project" value="InterPro"/>
</dbReference>
<dbReference type="GO" id="GO:0006412">
    <property type="term" value="P:translation"/>
    <property type="evidence" value="ECO:0007669"/>
    <property type="project" value="UniProtKB-UniRule"/>
</dbReference>
<dbReference type="CDD" id="cd00473">
    <property type="entry name" value="bS6"/>
    <property type="match status" value="1"/>
</dbReference>
<dbReference type="FunFam" id="3.30.70.60:FF:000002">
    <property type="entry name" value="30S ribosomal protein S6"/>
    <property type="match status" value="1"/>
</dbReference>
<dbReference type="Gene3D" id="3.30.70.60">
    <property type="match status" value="1"/>
</dbReference>
<dbReference type="HAMAP" id="MF_00360">
    <property type="entry name" value="Ribosomal_bS6"/>
    <property type="match status" value="1"/>
</dbReference>
<dbReference type="InterPro" id="IPR000529">
    <property type="entry name" value="Ribosomal_bS6"/>
</dbReference>
<dbReference type="InterPro" id="IPR020815">
    <property type="entry name" value="Ribosomal_bS6_CS"/>
</dbReference>
<dbReference type="InterPro" id="IPR035980">
    <property type="entry name" value="Ribosomal_bS6_sf"/>
</dbReference>
<dbReference type="InterPro" id="IPR020814">
    <property type="entry name" value="Ribosomal_S6_plastid/chlpt"/>
</dbReference>
<dbReference type="InterPro" id="IPR014717">
    <property type="entry name" value="Transl_elong_EF1B/ribsomal_bS6"/>
</dbReference>
<dbReference type="NCBIfam" id="TIGR00166">
    <property type="entry name" value="S6"/>
    <property type="match status" value="1"/>
</dbReference>
<dbReference type="PANTHER" id="PTHR21011">
    <property type="entry name" value="MITOCHONDRIAL 28S RIBOSOMAL PROTEIN S6"/>
    <property type="match status" value="1"/>
</dbReference>
<dbReference type="PANTHER" id="PTHR21011:SF1">
    <property type="entry name" value="SMALL RIBOSOMAL SUBUNIT PROTEIN BS6M"/>
    <property type="match status" value="1"/>
</dbReference>
<dbReference type="Pfam" id="PF01250">
    <property type="entry name" value="Ribosomal_S6"/>
    <property type="match status" value="1"/>
</dbReference>
<dbReference type="SUPFAM" id="SSF54995">
    <property type="entry name" value="Ribosomal protein S6"/>
    <property type="match status" value="1"/>
</dbReference>
<dbReference type="PROSITE" id="PS01048">
    <property type="entry name" value="RIBOSOMAL_S6"/>
    <property type="match status" value="1"/>
</dbReference>
<reference key="1">
    <citation type="submission" date="2007-10" db="EMBL/GenBank/DDBJ databases">
        <title>Complete sequence of chromosome of Desulforudis audaxviator MP104C.</title>
        <authorList>
            <person name="Copeland A."/>
            <person name="Lucas S."/>
            <person name="Lapidus A."/>
            <person name="Barry K."/>
            <person name="Glavina del Rio T."/>
            <person name="Dalin E."/>
            <person name="Tice H."/>
            <person name="Bruce D."/>
            <person name="Pitluck S."/>
            <person name="Lowry S.R."/>
            <person name="Larimer F."/>
            <person name="Land M.L."/>
            <person name="Hauser L."/>
            <person name="Kyrpides N."/>
            <person name="Ivanova N.N."/>
            <person name="Richardson P."/>
        </authorList>
    </citation>
    <scope>NUCLEOTIDE SEQUENCE [LARGE SCALE GENOMIC DNA]</scope>
    <source>
        <strain>MP104C</strain>
    </source>
</reference>
<keyword id="KW-1185">Reference proteome</keyword>
<keyword id="KW-0687">Ribonucleoprotein</keyword>
<keyword id="KW-0689">Ribosomal protein</keyword>
<keyword id="KW-0694">RNA-binding</keyword>
<keyword id="KW-0699">rRNA-binding</keyword>
<proteinExistence type="inferred from homology"/>
<comment type="function">
    <text evidence="1">Binds together with bS18 to 16S ribosomal RNA.</text>
</comment>
<comment type="similarity">
    <text evidence="1">Belongs to the bacterial ribosomal protein bS6 family.</text>
</comment>
<protein>
    <recommendedName>
        <fullName evidence="1">Small ribosomal subunit protein bS6</fullName>
    </recommendedName>
    <alternativeName>
        <fullName evidence="2">30S ribosomal protein S6</fullName>
    </alternativeName>
</protein>
<evidence type="ECO:0000255" key="1">
    <source>
        <dbReference type="HAMAP-Rule" id="MF_00360"/>
    </source>
</evidence>
<evidence type="ECO:0000305" key="2"/>
<accession>B1I6T1</accession>
<feature type="chain" id="PRO_1000120738" description="Small ribosomal subunit protein bS6">
    <location>
        <begin position="1"/>
        <end position="94"/>
    </location>
</feature>
<name>RS6_DESAP</name>
<organism>
    <name type="scientific">Desulforudis audaxviator (strain MP104C)</name>
    <dbReference type="NCBI Taxonomy" id="477974"/>
    <lineage>
        <taxon>Bacteria</taxon>
        <taxon>Bacillati</taxon>
        <taxon>Bacillota</taxon>
        <taxon>Clostridia</taxon>
        <taxon>Thermoanaerobacterales</taxon>
        <taxon>Candidatus Desulforudaceae</taxon>
        <taxon>Candidatus Desulforudis</taxon>
    </lineage>
</organism>
<gene>
    <name evidence="1" type="primary">rpsF</name>
    <name type="ordered locus">Daud_2216</name>
</gene>
<sequence length="94" mass="11389">MRQYEVMYILKPDLEDEESTQLIEKFSKIITDRDGEITELNRWGKRRLAYEIKDYREGHYVVMKCRAEHAAAQELDRVFRITDGLLRHMIIRED</sequence>